<comment type="function">
    <text evidence="2 3">Functions as a pyridoxal phosphate (PLP) phosphatase, which also catalyzes the dephosphorylation of pyridoxine 5'-phosphate (PNP) and pyridoxamine 5'-phosphate (PMP), with order of substrate preference PLP &gt; PNP &gt; PMP and therefore plays a role in vitamin B6 metabolism (By similarity). Also functions as a protein serine phosphatase that specifically dephosphorylates 'Ser-3' in proteins of the actin-depolymerizing factor (ADF)/cofilin family like CFL1 and DSTN. Thereby, regulates cofilin-dependent actin cytoskeleton reorganization, being required for normal progress through mitosis and normal cytokinesis. Does not dephosphorylate phosphothreonines in LIMK1. Does not dephosphorylate peptides containing phosphotyrosine (PubMed:15580268).</text>
</comment>
<comment type="catalytic activity">
    <reaction evidence="2">
        <text>pyridoxal 5'-phosphate + H2O = pyridoxal + phosphate</text>
        <dbReference type="Rhea" id="RHEA:20533"/>
        <dbReference type="ChEBI" id="CHEBI:15377"/>
        <dbReference type="ChEBI" id="CHEBI:17310"/>
        <dbReference type="ChEBI" id="CHEBI:43474"/>
        <dbReference type="ChEBI" id="CHEBI:597326"/>
        <dbReference type="EC" id="3.1.3.74"/>
    </reaction>
    <physiologicalReaction direction="left-to-right" evidence="2">
        <dbReference type="Rhea" id="RHEA:20534"/>
    </physiologicalReaction>
</comment>
<comment type="catalytic activity">
    <reaction evidence="2">
        <text>pyridoxine 5'-phosphate + H2O = pyridoxine + phosphate</text>
        <dbReference type="Rhea" id="RHEA:25112"/>
        <dbReference type="ChEBI" id="CHEBI:15377"/>
        <dbReference type="ChEBI" id="CHEBI:16709"/>
        <dbReference type="ChEBI" id="CHEBI:43474"/>
        <dbReference type="ChEBI" id="CHEBI:58589"/>
        <dbReference type="EC" id="3.1.3.74"/>
    </reaction>
    <physiologicalReaction direction="left-to-right" evidence="2">
        <dbReference type="Rhea" id="RHEA:25113"/>
    </physiologicalReaction>
</comment>
<comment type="catalytic activity">
    <reaction evidence="2">
        <text>pyridoxamine + phosphate = pyridoxamine 5'-phosphate + H2O</text>
        <dbReference type="Rhea" id="RHEA:25135"/>
        <dbReference type="ChEBI" id="CHEBI:15377"/>
        <dbReference type="ChEBI" id="CHEBI:43474"/>
        <dbReference type="ChEBI" id="CHEBI:57761"/>
        <dbReference type="ChEBI" id="CHEBI:58451"/>
        <dbReference type="EC" id="3.1.3.74"/>
    </reaction>
    <physiologicalReaction direction="right-to-left" evidence="2">
        <dbReference type="Rhea" id="RHEA:25137"/>
    </physiologicalReaction>
</comment>
<comment type="catalytic activity">
    <reaction evidence="3">
        <text>O-phospho-L-seryl-[protein] + H2O = L-seryl-[protein] + phosphate</text>
        <dbReference type="Rhea" id="RHEA:20629"/>
        <dbReference type="Rhea" id="RHEA-COMP:9863"/>
        <dbReference type="Rhea" id="RHEA-COMP:11604"/>
        <dbReference type="ChEBI" id="CHEBI:15377"/>
        <dbReference type="ChEBI" id="CHEBI:29999"/>
        <dbReference type="ChEBI" id="CHEBI:43474"/>
        <dbReference type="ChEBI" id="CHEBI:83421"/>
        <dbReference type="EC" id="3.1.3.16"/>
    </reaction>
    <physiologicalReaction direction="left-to-right" evidence="3">
        <dbReference type="Rhea" id="RHEA:20630"/>
    </physiologicalReaction>
</comment>
<comment type="cofactor">
    <cofactor evidence="2">
        <name>Mg(2+)</name>
        <dbReference type="ChEBI" id="CHEBI:18420"/>
    </cofactor>
    <text evidence="2">Divalent metal ions. Mg(2+) is the most effective.</text>
</comment>
<comment type="subunit">
    <text evidence="2">Homodimer.</text>
</comment>
<comment type="subcellular location">
    <subcellularLocation>
        <location evidence="3">Cytoplasm</location>
        <location evidence="3">Cytosol</location>
    </subcellularLocation>
    <subcellularLocation>
        <location evidence="2">Cytoplasm</location>
        <location evidence="2">Cytoskeleton</location>
    </subcellularLocation>
    <subcellularLocation>
        <location evidence="2">Cell projection</location>
        <location evidence="2">Ruffle membrane</location>
        <topology evidence="1 2">Peripheral membrane protein</topology>
        <orientation evidence="2">Cytoplasmic side</orientation>
    </subcellularLocation>
    <subcellularLocation>
        <location evidence="2">Cell projection</location>
        <location evidence="2">Lamellipodium membrane</location>
        <topology evidence="2">Peripheral membrane protein</topology>
        <orientation evidence="2">Cytoplasmic side</orientation>
    </subcellularLocation>
    <subcellularLocation>
        <location evidence="2">Cell membrane</location>
        <topology evidence="2">Peripheral membrane protein</topology>
        <orientation evidence="2">Cytoplasmic side</orientation>
    </subcellularLocation>
    <text evidence="2">Colocalizes with the actin cytoskeleton in membrane ruffles and lamellipodia. Diffusely distributed throughout the cytosol during pro-metaphase and metaphase. Detected at the dynamic cell poles during telophase. Detected at the cleavage furrow and contractile ring during cytokinesis. Transiently detected at the plasma membrane in late stages of cytokinesis. Detected at the midbody.</text>
</comment>
<comment type="tissue specificity">
    <text evidence="3">Detected in brain (at protein level).</text>
</comment>
<comment type="similarity">
    <text evidence="5">Belongs to the HAD-like hydrolase superfamily.</text>
</comment>
<proteinExistence type="evidence at protein level"/>
<sequence length="296" mass="31749">MARCERLRGAALRDVVGRAQGVLFDCNGVLWNGERAVPGAPELLERLAQAGKATLFVSNNSRRARPELALRFARLGFGGLRSEQLFSSALCAARLLRQRLLGPPDTQGAVFVLGGEGLRAELRAAGLRLAGDPSEDPGAAPRVRAVLVGYDEHFSFAKLSEACAHLRDPDCLLVATDRDPWHPLSDGSRTPGTGSLAAAVETASGRQALVVGKPSPYMFECITEHFSVDPGRTLMVGDRLETDILFGHRCGMTTVLTLTGVSSLEEAQAYLAAGQHDLVPHYYVESIADLMEGLED</sequence>
<evidence type="ECO:0000250" key="1"/>
<evidence type="ECO:0000250" key="2">
    <source>
        <dbReference type="UniProtKB" id="Q96GD0"/>
    </source>
</evidence>
<evidence type="ECO:0000269" key="3">
    <source>
    </source>
</evidence>
<evidence type="ECO:0000303" key="4">
    <source>
    </source>
</evidence>
<evidence type="ECO:0000305" key="5"/>
<keyword id="KW-1003">Cell membrane</keyword>
<keyword id="KW-0966">Cell projection</keyword>
<keyword id="KW-0963">Cytoplasm</keyword>
<keyword id="KW-0206">Cytoskeleton</keyword>
<keyword id="KW-0378">Hydrolase</keyword>
<keyword id="KW-0460">Magnesium</keyword>
<keyword id="KW-0472">Membrane</keyword>
<keyword id="KW-0479">Metal-binding</keyword>
<keyword id="KW-0663">Pyridoxal phosphate</keyword>
<keyword id="KW-1185">Reference proteome</keyword>
<reference key="1">
    <citation type="submission" date="2005-08" db="EMBL/GenBank/DDBJ databases">
        <authorList>
            <consortium name="NIH - Mammalian Gene Collection (MGC) project"/>
        </authorList>
    </citation>
    <scope>NUCLEOTIDE SEQUENCE [LARGE SCALE MRNA]</scope>
    <source>
        <strain>Crossbred X Angus</strain>
        <tissue>Ileum</tissue>
    </source>
</reference>
<reference key="2">
    <citation type="journal article" date="2005" name="Nat. Cell Biol.">
        <title>Chronophin, a novel HAD-type serine protein phosphatase, regulates cofilin-dependent actin dynamics.</title>
        <authorList>
            <person name="Gohla A."/>
            <person name="Birkenfeld J."/>
            <person name="Bokoch G.M."/>
        </authorList>
    </citation>
    <scope>FUNCTION</scope>
    <scope>CATALYTIC ACTIVITY</scope>
    <scope>SUBCELLULAR LOCATION</scope>
    <scope>TISSUE SPECIFICITY</scope>
</reference>
<protein>
    <recommendedName>
        <fullName evidence="4">Chronophin</fullName>
        <ecNumber evidence="3">3.1.3.16</ecNumber>
        <ecNumber evidence="2">3.1.3.74</ecNumber>
    </recommendedName>
    <alternativeName>
        <fullName evidence="4">Protein serine phosphatase</fullName>
    </alternativeName>
    <alternativeName>
        <fullName evidence="2">Pyridoxal phosphate phosphatase</fullName>
        <shortName evidence="2">PLP phosphatase</shortName>
    </alternativeName>
</protein>
<accession>Q3ZBF9</accession>
<feature type="chain" id="PRO_0000254016" description="Chronophin">
    <location>
        <begin position="1"/>
        <end position="296"/>
    </location>
</feature>
<feature type="active site" description="Nucleophile" evidence="2">
    <location>
        <position position="25"/>
    </location>
</feature>
<feature type="active site" description="Proton donor" evidence="2">
    <location>
        <position position="27"/>
    </location>
</feature>
<feature type="binding site" evidence="2">
    <location>
        <position position="25"/>
    </location>
    <ligand>
        <name>Mg(2+)</name>
        <dbReference type="ChEBI" id="CHEBI:18420"/>
    </ligand>
</feature>
<feature type="binding site" evidence="2">
    <location>
        <position position="27"/>
    </location>
    <ligand>
        <name>Mg(2+)</name>
        <dbReference type="ChEBI" id="CHEBI:18420"/>
    </ligand>
</feature>
<feature type="binding site" evidence="2">
    <location>
        <begin position="58"/>
        <end position="60"/>
    </location>
    <ligand>
        <name>substrate</name>
    </ligand>
</feature>
<feature type="binding site" evidence="2">
    <location>
        <position position="182"/>
    </location>
    <ligand>
        <name>substrate</name>
    </ligand>
</feature>
<feature type="binding site" evidence="2">
    <location>
        <position position="213"/>
    </location>
    <ligand>
        <name>substrate</name>
    </ligand>
</feature>
<feature type="binding site" evidence="2">
    <location>
        <position position="238"/>
    </location>
    <ligand>
        <name>Mg(2+)</name>
        <dbReference type="ChEBI" id="CHEBI:18420"/>
    </ligand>
</feature>
<dbReference type="EC" id="3.1.3.16" evidence="3"/>
<dbReference type="EC" id="3.1.3.74" evidence="2"/>
<dbReference type="EMBL" id="BC103329">
    <property type="protein sequence ID" value="AAI03330.1"/>
    <property type="molecule type" value="mRNA"/>
</dbReference>
<dbReference type="RefSeq" id="NP_001030207.1">
    <property type="nucleotide sequence ID" value="NM_001035035.2"/>
</dbReference>
<dbReference type="SMR" id="Q3ZBF9"/>
<dbReference type="FunCoup" id="Q3ZBF9">
    <property type="interactions" value="448"/>
</dbReference>
<dbReference type="STRING" id="9913.ENSBTAP00000016505"/>
<dbReference type="PaxDb" id="9913-ENSBTAP00000016505"/>
<dbReference type="PeptideAtlas" id="Q3ZBF9"/>
<dbReference type="GeneID" id="506308"/>
<dbReference type="KEGG" id="bta:506308"/>
<dbReference type="CTD" id="57026"/>
<dbReference type="eggNOG" id="KOG2882">
    <property type="taxonomic scope" value="Eukaryota"/>
</dbReference>
<dbReference type="InParanoid" id="Q3ZBF9"/>
<dbReference type="OrthoDB" id="413953at2759"/>
<dbReference type="Proteomes" id="UP000009136">
    <property type="component" value="Unplaced"/>
</dbReference>
<dbReference type="GO" id="GO:0005737">
    <property type="term" value="C:cytoplasm"/>
    <property type="evidence" value="ECO:0000318"/>
    <property type="project" value="GO_Central"/>
</dbReference>
<dbReference type="GO" id="GO:0005856">
    <property type="term" value="C:cytoskeleton"/>
    <property type="evidence" value="ECO:0007669"/>
    <property type="project" value="UniProtKB-SubCell"/>
</dbReference>
<dbReference type="GO" id="GO:0005829">
    <property type="term" value="C:cytosol"/>
    <property type="evidence" value="ECO:0000314"/>
    <property type="project" value="UniProtKB"/>
</dbReference>
<dbReference type="GO" id="GO:0031258">
    <property type="term" value="C:lamellipodium membrane"/>
    <property type="evidence" value="ECO:0007669"/>
    <property type="project" value="UniProtKB-SubCell"/>
</dbReference>
<dbReference type="GO" id="GO:0032587">
    <property type="term" value="C:ruffle membrane"/>
    <property type="evidence" value="ECO:0007669"/>
    <property type="project" value="UniProtKB-SubCell"/>
</dbReference>
<dbReference type="GO" id="GO:0000287">
    <property type="term" value="F:magnesium ion binding"/>
    <property type="evidence" value="ECO:0000250"/>
    <property type="project" value="UniProtKB"/>
</dbReference>
<dbReference type="GO" id="GO:0004721">
    <property type="term" value="F:phosphoprotein phosphatase activity"/>
    <property type="evidence" value="ECO:0000314"/>
    <property type="project" value="UniProtKB"/>
</dbReference>
<dbReference type="GO" id="GO:0004722">
    <property type="term" value="F:protein serine/threonine phosphatase activity"/>
    <property type="evidence" value="ECO:0007669"/>
    <property type="project" value="UniProtKB-EC"/>
</dbReference>
<dbReference type="GO" id="GO:0033883">
    <property type="term" value="F:pyridoxal phosphatase activity"/>
    <property type="evidence" value="ECO:0000250"/>
    <property type="project" value="UniProtKB"/>
</dbReference>
<dbReference type="GO" id="GO:0030836">
    <property type="term" value="P:positive regulation of actin filament depolymerization"/>
    <property type="evidence" value="ECO:0000250"/>
    <property type="project" value="UniProtKB"/>
</dbReference>
<dbReference type="GO" id="GO:0006470">
    <property type="term" value="P:protein dephosphorylation"/>
    <property type="evidence" value="ECO:0000314"/>
    <property type="project" value="UniProtKB"/>
</dbReference>
<dbReference type="GO" id="GO:0032361">
    <property type="term" value="P:pyridoxal phosphate catabolic process"/>
    <property type="evidence" value="ECO:0000250"/>
    <property type="project" value="UniProtKB"/>
</dbReference>
<dbReference type="GO" id="GO:0032465">
    <property type="term" value="P:regulation of cytokinesis"/>
    <property type="evidence" value="ECO:0000250"/>
    <property type="project" value="UniProtKB"/>
</dbReference>
<dbReference type="GO" id="GO:0007088">
    <property type="term" value="P:regulation of mitotic nuclear division"/>
    <property type="evidence" value="ECO:0000250"/>
    <property type="project" value="UniProtKB"/>
</dbReference>
<dbReference type="CDD" id="cd07510">
    <property type="entry name" value="HAD_Pase_UmpH-like"/>
    <property type="match status" value="1"/>
</dbReference>
<dbReference type="FunFam" id="3.40.50.1000:FF:000140">
    <property type="entry name" value="Pyridoxal phosphate phosphatase"/>
    <property type="match status" value="1"/>
</dbReference>
<dbReference type="FunFam" id="3.40.50.1000:FF:000163">
    <property type="entry name" value="Pyridoxal phosphate phosphatase"/>
    <property type="match status" value="1"/>
</dbReference>
<dbReference type="Gene3D" id="3.40.50.1000">
    <property type="entry name" value="HAD superfamily/HAD-like"/>
    <property type="match status" value="2"/>
</dbReference>
<dbReference type="InterPro" id="IPR036412">
    <property type="entry name" value="HAD-like_sf"/>
</dbReference>
<dbReference type="InterPro" id="IPR006357">
    <property type="entry name" value="HAD-SF_hydro_IIA"/>
</dbReference>
<dbReference type="InterPro" id="IPR023214">
    <property type="entry name" value="HAD_sf"/>
</dbReference>
<dbReference type="InterPro" id="IPR006349">
    <property type="entry name" value="PGP_euk"/>
</dbReference>
<dbReference type="NCBIfam" id="TIGR01460">
    <property type="entry name" value="HAD-SF-IIA"/>
    <property type="match status" value="1"/>
</dbReference>
<dbReference type="NCBIfam" id="TIGR01452">
    <property type="entry name" value="PGP_euk"/>
    <property type="match status" value="1"/>
</dbReference>
<dbReference type="PANTHER" id="PTHR19288">
    <property type="entry name" value="4-NITROPHENYLPHOSPHATASE-RELATED"/>
    <property type="match status" value="1"/>
</dbReference>
<dbReference type="PANTHER" id="PTHR19288:SF94">
    <property type="entry name" value="CHRONOPHIN"/>
    <property type="match status" value="1"/>
</dbReference>
<dbReference type="Pfam" id="PF13344">
    <property type="entry name" value="Hydrolase_6"/>
    <property type="match status" value="1"/>
</dbReference>
<dbReference type="Pfam" id="PF13242">
    <property type="entry name" value="Hydrolase_like"/>
    <property type="match status" value="1"/>
</dbReference>
<dbReference type="PIRSF" id="PIRSF000915">
    <property type="entry name" value="PGP-type_phosphatase"/>
    <property type="match status" value="1"/>
</dbReference>
<dbReference type="SFLD" id="SFLDG01139">
    <property type="entry name" value="C2.A:_Pyridoxal_Phosphate_Phos"/>
    <property type="match status" value="1"/>
</dbReference>
<dbReference type="SFLD" id="SFLDS00003">
    <property type="entry name" value="Haloacid_Dehalogenase"/>
    <property type="match status" value="1"/>
</dbReference>
<dbReference type="SUPFAM" id="SSF56784">
    <property type="entry name" value="HAD-like"/>
    <property type="match status" value="1"/>
</dbReference>
<gene>
    <name evidence="2" type="primary">PDXP</name>
    <name evidence="4" type="synonym">CIN</name>
</gene>
<organism>
    <name type="scientific">Bos taurus</name>
    <name type="common">Bovine</name>
    <dbReference type="NCBI Taxonomy" id="9913"/>
    <lineage>
        <taxon>Eukaryota</taxon>
        <taxon>Metazoa</taxon>
        <taxon>Chordata</taxon>
        <taxon>Craniata</taxon>
        <taxon>Vertebrata</taxon>
        <taxon>Euteleostomi</taxon>
        <taxon>Mammalia</taxon>
        <taxon>Eutheria</taxon>
        <taxon>Laurasiatheria</taxon>
        <taxon>Artiodactyla</taxon>
        <taxon>Ruminantia</taxon>
        <taxon>Pecora</taxon>
        <taxon>Bovidae</taxon>
        <taxon>Bovinae</taxon>
        <taxon>Bos</taxon>
    </lineage>
</organism>
<name>PLPP_BOVIN</name>